<reference key="1">
    <citation type="journal article" date="2001" name="Genomics">
        <title>Identification of a CD20-, Fc-epsilon-RI-beta-, and HTm4-related gene family: sixteen new MS4A family members expressed in human and mouse.</title>
        <authorList>
            <person name="Liang Y."/>
            <person name="Tedder T.F."/>
        </authorList>
    </citation>
    <scope>NUCLEOTIDE SEQUENCE [MRNA]</scope>
    <source>
        <tissue>Mammary gland</tissue>
    </source>
</reference>
<reference key="2">
    <citation type="journal article" date="2001" name="Gene">
        <title>Identification of a new multigene four-transmembrane family (MS4A) related to CD20, HTm4 and beta subunit of the high-affinity IgE receptor.</title>
        <authorList>
            <person name="Ishibashi K."/>
            <person name="Suzuki M."/>
            <person name="Sasaki S."/>
            <person name="Imai M."/>
        </authorList>
    </citation>
    <scope>NUCLEOTIDE SEQUENCE [MRNA] OF 1-189</scope>
</reference>
<reference key="3">
    <citation type="journal article" date="2005" name="Science">
        <title>The transcriptional landscape of the mammalian genome.</title>
        <authorList>
            <person name="Carninci P."/>
            <person name="Kasukawa T."/>
            <person name="Katayama S."/>
            <person name="Gough J."/>
            <person name="Frith M.C."/>
            <person name="Maeda N."/>
            <person name="Oyama R."/>
            <person name="Ravasi T."/>
            <person name="Lenhard B."/>
            <person name="Wells C."/>
            <person name="Kodzius R."/>
            <person name="Shimokawa K."/>
            <person name="Bajic V.B."/>
            <person name="Brenner S.E."/>
            <person name="Batalov S."/>
            <person name="Forrest A.R."/>
            <person name="Zavolan M."/>
            <person name="Davis M.J."/>
            <person name="Wilming L.G."/>
            <person name="Aidinis V."/>
            <person name="Allen J.E."/>
            <person name="Ambesi-Impiombato A."/>
            <person name="Apweiler R."/>
            <person name="Aturaliya R.N."/>
            <person name="Bailey T.L."/>
            <person name="Bansal M."/>
            <person name="Baxter L."/>
            <person name="Beisel K.W."/>
            <person name="Bersano T."/>
            <person name="Bono H."/>
            <person name="Chalk A.M."/>
            <person name="Chiu K.P."/>
            <person name="Choudhary V."/>
            <person name="Christoffels A."/>
            <person name="Clutterbuck D.R."/>
            <person name="Crowe M.L."/>
            <person name="Dalla E."/>
            <person name="Dalrymple B.P."/>
            <person name="de Bono B."/>
            <person name="Della Gatta G."/>
            <person name="di Bernardo D."/>
            <person name="Down T."/>
            <person name="Engstrom P."/>
            <person name="Fagiolini M."/>
            <person name="Faulkner G."/>
            <person name="Fletcher C.F."/>
            <person name="Fukushima T."/>
            <person name="Furuno M."/>
            <person name="Futaki S."/>
            <person name="Gariboldi M."/>
            <person name="Georgii-Hemming P."/>
            <person name="Gingeras T.R."/>
            <person name="Gojobori T."/>
            <person name="Green R.E."/>
            <person name="Gustincich S."/>
            <person name="Harbers M."/>
            <person name="Hayashi Y."/>
            <person name="Hensch T.K."/>
            <person name="Hirokawa N."/>
            <person name="Hill D."/>
            <person name="Huminiecki L."/>
            <person name="Iacono M."/>
            <person name="Ikeo K."/>
            <person name="Iwama A."/>
            <person name="Ishikawa T."/>
            <person name="Jakt M."/>
            <person name="Kanapin A."/>
            <person name="Katoh M."/>
            <person name="Kawasawa Y."/>
            <person name="Kelso J."/>
            <person name="Kitamura H."/>
            <person name="Kitano H."/>
            <person name="Kollias G."/>
            <person name="Krishnan S.P."/>
            <person name="Kruger A."/>
            <person name="Kummerfeld S.K."/>
            <person name="Kurochkin I.V."/>
            <person name="Lareau L.F."/>
            <person name="Lazarevic D."/>
            <person name="Lipovich L."/>
            <person name="Liu J."/>
            <person name="Liuni S."/>
            <person name="McWilliam S."/>
            <person name="Madan Babu M."/>
            <person name="Madera M."/>
            <person name="Marchionni L."/>
            <person name="Matsuda H."/>
            <person name="Matsuzawa S."/>
            <person name="Miki H."/>
            <person name="Mignone F."/>
            <person name="Miyake S."/>
            <person name="Morris K."/>
            <person name="Mottagui-Tabar S."/>
            <person name="Mulder N."/>
            <person name="Nakano N."/>
            <person name="Nakauchi H."/>
            <person name="Ng P."/>
            <person name="Nilsson R."/>
            <person name="Nishiguchi S."/>
            <person name="Nishikawa S."/>
            <person name="Nori F."/>
            <person name="Ohara O."/>
            <person name="Okazaki Y."/>
            <person name="Orlando V."/>
            <person name="Pang K.C."/>
            <person name="Pavan W.J."/>
            <person name="Pavesi G."/>
            <person name="Pesole G."/>
            <person name="Petrovsky N."/>
            <person name="Piazza S."/>
            <person name="Reed J."/>
            <person name="Reid J.F."/>
            <person name="Ring B.Z."/>
            <person name="Ringwald M."/>
            <person name="Rost B."/>
            <person name="Ruan Y."/>
            <person name="Salzberg S.L."/>
            <person name="Sandelin A."/>
            <person name="Schneider C."/>
            <person name="Schoenbach C."/>
            <person name="Sekiguchi K."/>
            <person name="Semple C.A."/>
            <person name="Seno S."/>
            <person name="Sessa L."/>
            <person name="Sheng Y."/>
            <person name="Shibata Y."/>
            <person name="Shimada H."/>
            <person name="Shimada K."/>
            <person name="Silva D."/>
            <person name="Sinclair B."/>
            <person name="Sperling S."/>
            <person name="Stupka E."/>
            <person name="Sugiura K."/>
            <person name="Sultana R."/>
            <person name="Takenaka Y."/>
            <person name="Taki K."/>
            <person name="Tammoja K."/>
            <person name="Tan S.L."/>
            <person name="Tang S."/>
            <person name="Taylor M.S."/>
            <person name="Tegner J."/>
            <person name="Teichmann S.A."/>
            <person name="Ueda H.R."/>
            <person name="van Nimwegen E."/>
            <person name="Verardo R."/>
            <person name="Wei C.L."/>
            <person name="Yagi K."/>
            <person name="Yamanishi H."/>
            <person name="Zabarovsky E."/>
            <person name="Zhu S."/>
            <person name="Zimmer A."/>
            <person name="Hide W."/>
            <person name="Bult C."/>
            <person name="Grimmond S.M."/>
            <person name="Teasdale R.D."/>
            <person name="Liu E.T."/>
            <person name="Brusic V."/>
            <person name="Quackenbush J."/>
            <person name="Wahlestedt C."/>
            <person name="Mattick J.S."/>
            <person name="Hume D.A."/>
            <person name="Kai C."/>
            <person name="Sasaki D."/>
            <person name="Tomaru Y."/>
            <person name="Fukuda S."/>
            <person name="Kanamori-Katayama M."/>
            <person name="Suzuki M."/>
            <person name="Aoki J."/>
            <person name="Arakawa T."/>
            <person name="Iida J."/>
            <person name="Imamura K."/>
            <person name="Itoh M."/>
            <person name="Kato T."/>
            <person name="Kawaji H."/>
            <person name="Kawagashira N."/>
            <person name="Kawashima T."/>
            <person name="Kojima M."/>
            <person name="Kondo S."/>
            <person name="Konno H."/>
            <person name="Nakano K."/>
            <person name="Ninomiya N."/>
            <person name="Nishio T."/>
            <person name="Okada M."/>
            <person name="Plessy C."/>
            <person name="Shibata K."/>
            <person name="Shiraki T."/>
            <person name="Suzuki S."/>
            <person name="Tagami M."/>
            <person name="Waki K."/>
            <person name="Watahiki A."/>
            <person name="Okamura-Oho Y."/>
            <person name="Suzuki H."/>
            <person name="Kawai J."/>
            <person name="Hayashizaki Y."/>
        </authorList>
    </citation>
    <scope>NUCLEOTIDE SEQUENCE [LARGE SCALE MRNA]</scope>
    <source>
        <strain>C57BL/6J</strain>
        <tissue>Embryo</tissue>
    </source>
</reference>
<reference key="4">
    <citation type="journal article" date="2004" name="Genome Res.">
        <title>The status, quality, and expansion of the NIH full-length cDNA project: the Mammalian Gene Collection (MGC).</title>
        <authorList>
            <consortium name="The MGC Project Team"/>
        </authorList>
    </citation>
    <scope>NUCLEOTIDE SEQUENCE [LARGE SCALE MRNA]</scope>
</reference>
<reference key="5">
    <citation type="journal article" date="2010" name="Cell">
        <title>A tissue-specific atlas of mouse protein phosphorylation and expression.</title>
        <authorList>
            <person name="Huttlin E.L."/>
            <person name="Jedrychowski M.P."/>
            <person name="Elias J.E."/>
            <person name="Goswami T."/>
            <person name="Rad R."/>
            <person name="Beausoleil S.A."/>
            <person name="Villen J."/>
            <person name="Haas W."/>
            <person name="Sowa M.E."/>
            <person name="Gygi S.P."/>
        </authorList>
    </citation>
    <scope>PHOSPHORYLATION [LARGE SCALE ANALYSIS] AT SER-235</scope>
    <scope>IDENTIFICATION BY MASS SPECTROMETRY [LARGE SCALE ANALYSIS]</scope>
    <source>
        <tissue>Lung</tissue>
    </source>
</reference>
<proteinExistence type="evidence at protein level"/>
<sequence length="247" mass="26383">MIPQVVTSETVTVISPNGISFPQTDKPQPSHQSQDSLKKHLKAEIKVMAAIQIMCAVMVLSLGIILASVPSNLHFTSVFSILLESGYPFVGALFFAISGILSIVTEKKMTKPLVHSSLALSILSVLSALTGIAILSVSLAALEPALQQCKLAFTQLDTTQDAYHFFSPEPLNSCFVAKAALTGVFSLMLISSVLELGLAVLTATLWWKQSSSAFSGNVIFLSQNSKNKSSVSSESLCNPTYENILTS</sequence>
<keyword id="KW-0472">Membrane</keyword>
<keyword id="KW-0597">Phosphoprotein</keyword>
<keyword id="KW-0675">Receptor</keyword>
<keyword id="KW-1185">Reference proteome</keyword>
<keyword id="KW-0812">Transmembrane</keyword>
<keyword id="KW-1133">Transmembrane helix</keyword>
<gene>
    <name type="primary">Ms4a6d</name>
    <name type="synonym">Cd20l8</name>
    <name type="synonym">Ms4a11</name>
</gene>
<accession>Q99N07</accession>
<accession>Q9D0X1</accession>
<accession>Q9EQY7</accession>
<organism>
    <name type="scientific">Mus musculus</name>
    <name type="common">Mouse</name>
    <dbReference type="NCBI Taxonomy" id="10090"/>
    <lineage>
        <taxon>Eukaryota</taxon>
        <taxon>Metazoa</taxon>
        <taxon>Chordata</taxon>
        <taxon>Craniata</taxon>
        <taxon>Vertebrata</taxon>
        <taxon>Euteleostomi</taxon>
        <taxon>Mammalia</taxon>
        <taxon>Eutheria</taxon>
        <taxon>Euarchontoglires</taxon>
        <taxon>Glires</taxon>
        <taxon>Rodentia</taxon>
        <taxon>Myomorpha</taxon>
        <taxon>Muroidea</taxon>
        <taxon>Muridae</taxon>
        <taxon>Murinae</taxon>
        <taxon>Mus</taxon>
        <taxon>Mus</taxon>
    </lineage>
</organism>
<evidence type="ECO:0000255" key="1"/>
<evidence type="ECO:0000305" key="2"/>
<evidence type="ECO:0007744" key="3">
    <source>
    </source>
</evidence>
<comment type="function">
    <text>May be involved in signal transduction as a component of a multimeric receptor complex.</text>
</comment>
<comment type="subcellular location">
    <subcellularLocation>
        <location>Membrane</location>
        <topology>Multi-pass membrane protein</topology>
    </subcellularLocation>
</comment>
<comment type="tissue specificity">
    <text>Expressed in thymus, spleen, intestine, colon, testis, heart, liver, brain, kidney, peripheral lymph node and bone marrow.</text>
</comment>
<comment type="similarity">
    <text evidence="2">Belongs to the MS4A family.</text>
</comment>
<comment type="sequence caution" evidence="2">
    <conflict type="frameshift">
        <sequence resource="EMBL-CDS" id="BAB18759"/>
    </conflict>
</comment>
<name>M4A6D_MOUSE</name>
<feature type="chain" id="PRO_0000158641" description="Membrane-spanning 4-domains subfamily A member 6D">
    <location>
        <begin position="1"/>
        <end position="247"/>
    </location>
</feature>
<feature type="topological domain" description="Cytoplasmic" evidence="1">
    <location>
        <begin position="1"/>
        <end position="46"/>
    </location>
</feature>
<feature type="transmembrane region" description="Helical" evidence="1">
    <location>
        <begin position="47"/>
        <end position="67"/>
    </location>
</feature>
<feature type="topological domain" description="Extracellular" evidence="1">
    <location>
        <begin position="68"/>
        <end position="80"/>
    </location>
</feature>
<feature type="transmembrane region" description="Helical" evidence="1">
    <location>
        <begin position="81"/>
        <end position="101"/>
    </location>
</feature>
<feature type="topological domain" description="Cytoplasmic" evidence="1">
    <location>
        <begin position="102"/>
        <end position="121"/>
    </location>
</feature>
<feature type="transmembrane region" description="Helical" evidence="1">
    <location>
        <begin position="122"/>
        <end position="142"/>
    </location>
</feature>
<feature type="topological domain" description="Extracellular" evidence="1">
    <location>
        <begin position="143"/>
        <end position="180"/>
    </location>
</feature>
<feature type="transmembrane region" description="Helical" evidence="1">
    <location>
        <begin position="181"/>
        <end position="201"/>
    </location>
</feature>
<feature type="topological domain" description="Cytoplasmic" evidence="1">
    <location>
        <begin position="202"/>
        <end position="247"/>
    </location>
</feature>
<feature type="modified residue" description="Phosphoserine" evidence="3">
    <location>
        <position position="235"/>
    </location>
</feature>
<feature type="sequence conflict" description="In Ref. 3; BAB23253 and 4; AAH29738." evidence="2" ref="3 4">
    <original>S</original>
    <variation>A</variation>
    <location>
        <position position="61"/>
    </location>
</feature>
<feature type="sequence conflict" description="In Ref. 2; BAB18759." evidence="2" ref="2">
    <original>V</original>
    <variation>G</variation>
    <location>
        <position position="69"/>
    </location>
</feature>
<feature type="sequence conflict" description="In Ref. 2; BAB18759." evidence="2" ref="2">
    <original>F</original>
    <variation>V</variation>
    <location>
        <position position="79"/>
    </location>
</feature>
<feature type="sequence conflict" description="In Ref. 2; BAB18759." evidence="2" ref="2">
    <original>F</original>
    <variation>V</variation>
    <location>
        <position position="94"/>
    </location>
</feature>
<feature type="sequence conflict" description="In Ref. 2; BAB18759." evidence="2" ref="2">
    <original>SIV</original>
    <variation>AIG</variation>
    <location>
        <begin position="102"/>
        <end position="104"/>
    </location>
</feature>
<feature type="sequence conflict" description="In Ref. 2; BAB18759." evidence="2" ref="2">
    <original>V</original>
    <variation>G</variation>
    <location>
        <position position="114"/>
    </location>
</feature>
<feature type="sequence conflict" description="In Ref. 2; BAB18759." evidence="2" ref="2">
    <original>S</original>
    <variation>R</variation>
    <location>
        <position position="124"/>
    </location>
</feature>
<feature type="sequence conflict" description="In Ref. 2; BAB18759." evidence="2" ref="2">
    <original>S</original>
    <variation>R</variation>
    <location>
        <position position="138"/>
    </location>
</feature>
<feature type="sequence conflict" description="In Ref. 2; BAB18759." evidence="2" ref="2">
    <original>C</original>
    <variation>W</variation>
    <location>
        <position position="149"/>
    </location>
</feature>
<feature type="sequence conflict" description="In Ref. 2; BAB18759." evidence="2" ref="2">
    <original>H</original>
    <variation>Q</variation>
    <location>
        <position position="164"/>
    </location>
</feature>
<feature type="sequence conflict" description="In Ref. 2." evidence="2" ref="2">
    <location>
        <position position="180"/>
    </location>
</feature>
<protein>
    <recommendedName>
        <fullName>Membrane-spanning 4-domains subfamily A member 6D</fullName>
    </recommendedName>
    <alternativeName>
        <fullName>CD20 antigen-like 8</fullName>
    </alternativeName>
</protein>
<dbReference type="EMBL" id="AF237911">
    <property type="protein sequence ID" value="AAK37593.1"/>
    <property type="molecule type" value="mRNA"/>
</dbReference>
<dbReference type="EMBL" id="AB026047">
    <property type="protein sequence ID" value="BAB18759.1"/>
    <property type="status" value="ALT_FRAME"/>
    <property type="molecule type" value="mRNA"/>
</dbReference>
<dbReference type="EMBL" id="AK004295">
    <property type="protein sequence ID" value="BAB23253.1"/>
    <property type="molecule type" value="mRNA"/>
</dbReference>
<dbReference type="EMBL" id="BC018331">
    <property type="protein sequence ID" value="AAH18331.1"/>
    <property type="molecule type" value="mRNA"/>
</dbReference>
<dbReference type="EMBL" id="BC029738">
    <property type="protein sequence ID" value="AAH29738.1"/>
    <property type="molecule type" value="mRNA"/>
</dbReference>
<dbReference type="CCDS" id="CCDS29603.1"/>
<dbReference type="RefSeq" id="NP_081111.1">
    <property type="nucleotide sequence ID" value="NM_026835.2"/>
</dbReference>
<dbReference type="SMR" id="Q99N07"/>
<dbReference type="BioGRID" id="213043">
    <property type="interactions" value="1"/>
</dbReference>
<dbReference type="FunCoup" id="Q99N07">
    <property type="interactions" value="81"/>
</dbReference>
<dbReference type="STRING" id="10090.ENSMUSP00000025582"/>
<dbReference type="iPTMnet" id="Q99N07"/>
<dbReference type="PhosphoSitePlus" id="Q99N07"/>
<dbReference type="PaxDb" id="10090-ENSMUSP00000025582"/>
<dbReference type="ProteomicsDB" id="287284"/>
<dbReference type="DNASU" id="68774"/>
<dbReference type="GeneID" id="68774"/>
<dbReference type="KEGG" id="mmu:68774"/>
<dbReference type="AGR" id="MGI:1916024"/>
<dbReference type="CTD" id="68774"/>
<dbReference type="MGI" id="MGI:1916024">
    <property type="gene designation" value="Ms4a6d"/>
</dbReference>
<dbReference type="eggNOG" id="ENOG502SUQB">
    <property type="taxonomic scope" value="Eukaryota"/>
</dbReference>
<dbReference type="InParanoid" id="Q99N07"/>
<dbReference type="OrthoDB" id="10071849at2759"/>
<dbReference type="PhylomeDB" id="Q99N07"/>
<dbReference type="BioGRID-ORCS" id="68774">
    <property type="hits" value="2 hits in 77 CRISPR screens"/>
</dbReference>
<dbReference type="PRO" id="PR:Q99N07"/>
<dbReference type="Proteomes" id="UP000000589">
    <property type="component" value="Unplaced"/>
</dbReference>
<dbReference type="RNAct" id="Q99N07">
    <property type="molecule type" value="protein"/>
</dbReference>
<dbReference type="GO" id="GO:0016020">
    <property type="term" value="C:membrane"/>
    <property type="evidence" value="ECO:0007669"/>
    <property type="project" value="UniProtKB-SubCell"/>
</dbReference>
<dbReference type="InterPro" id="IPR007237">
    <property type="entry name" value="CD20-like"/>
</dbReference>
<dbReference type="InterPro" id="IPR030417">
    <property type="entry name" value="MS4A"/>
</dbReference>
<dbReference type="PANTHER" id="PTHR23320:SF135">
    <property type="entry name" value="MEMBRANE-SPANNING 4-DOMAINS SUBFAMILY A MEMBER 6A"/>
    <property type="match status" value="1"/>
</dbReference>
<dbReference type="PANTHER" id="PTHR23320">
    <property type="entry name" value="MEMBRANE-SPANNING 4-DOMAINS SUBFAMILY A MS4A -RELATED"/>
    <property type="match status" value="1"/>
</dbReference>
<dbReference type="Pfam" id="PF04103">
    <property type="entry name" value="CD20"/>
    <property type="match status" value="1"/>
</dbReference>